<protein>
    <recommendedName>
        <fullName>Teneurin-2</fullName>
        <shortName>Ten-2</shortName>
    </recommendedName>
    <alternativeName>
        <fullName>Protein Odd Oz/ten-m homolog 2</fullName>
    </alternativeName>
    <alternativeName>
        <fullName>Tenascin-M2</fullName>
        <shortName>Ten-m2</shortName>
    </alternativeName>
    <alternativeName>
        <fullName>Teneurin transmembrane protein 2</fullName>
    </alternativeName>
    <component>
        <recommendedName>
            <fullName>Ten-2, soluble form</fullName>
        </recommendedName>
    </component>
    <component>
        <recommendedName>
            <fullName>Ten-2 intracellular domain</fullName>
            <shortName>Ten-2 ICD</shortName>
        </recommendedName>
    </component>
</protein>
<comment type="function">
    <text evidence="11">Involved in neural development, regulating the establishment of proper connectivity within the nervous system (PubMed:21724987). Acts as a ligand of the ADGRL1 and ADGRL3 receptors that are expressed at the surface of adjacent cells (PubMed:21724987). Promotes the formation of filopodia and enlarged growth cone in neuronal cells (PubMed:21724987). Mediates axon guidance and homophilic and heterophilic cell-cell adhesion (PubMed:21724987). May function as a cellular signal transducer (PubMed:21724987).</text>
</comment>
<comment type="function">
    <molecule>Isoform 2</molecule>
    <text evidence="11">Acts as a ligand of the ADGRL1 receptor. Mediates axon guidance and heterophilic cell-cell adhesion.</text>
</comment>
<comment type="function">
    <molecule>Ten-2 intracellular domain</molecule>
    <text evidence="3">Induces gene transcription inhibition.</text>
</comment>
<comment type="subunit">
    <text evidence="1 11 12">Homodimer; disulfide-linked (Probable). Heterodimer with either TENM1 or TENM3. May also form heterodimer with TENM4 (By similarity). Isoform 2 (C-terminal globular domain) interacts with ADGRL1 isoform 2.</text>
</comment>
<comment type="subcellular location">
    <subcellularLocation>
        <location evidence="11">Cell membrane</location>
        <topology evidence="6">Single-pass membrane protein</topology>
    </subcellularLocation>
    <subcellularLocation>
        <location evidence="5">Presynaptic cell membrane</location>
        <topology evidence="6">Single-pass membrane protein</topology>
    </subcellularLocation>
    <subcellularLocation>
        <location evidence="4">Postsynaptic cell membrane</location>
        <topology evidence="6">Single-pass membrane protein</topology>
    </subcellularLocation>
    <subcellularLocation>
        <location evidence="3">Endoplasmic reticulum</location>
    </subcellularLocation>
    <subcellularLocation>
        <location evidence="3">Golgi apparatus</location>
    </subcellularLocation>
    <subcellularLocation>
        <location evidence="4">Synapse</location>
    </subcellularLocation>
    <subcellularLocation>
        <location evidence="4">Cell projection</location>
        <location evidence="4">Dendritic spine</location>
    </subcellularLocation>
    <subcellularLocation>
        <location evidence="3">Cell projection</location>
        <location evidence="3">Filopodium</location>
    </subcellularLocation>
    <subcellularLocation>
        <location evidence="3">Cell projection</location>
        <location evidence="3">Growth cone</location>
    </subcellularLocation>
</comment>
<comment type="subcellular location">
    <molecule>Isoform 2</molecule>
    <subcellularLocation>
        <location evidence="11">Cell membrane</location>
    </subcellularLocation>
    <text evidence="11">Colocalizes with ADGRL1 across intercellular junctions.</text>
</comment>
<comment type="subcellular location">
    <molecule>Ten-2 intracellular domain</molecule>
    <subcellularLocation>
        <location evidence="3">Nucleus</location>
        <location evidence="3">PML body</location>
    </subcellularLocation>
</comment>
<comment type="alternative products">
    <event type="alternative splicing"/>
    <isoform>
        <id>Q9NT68-1</id>
        <name>1</name>
        <sequence type="displayed"/>
    </isoform>
    <isoform>
        <id>Q9NT68-2</id>
        <name>2</name>
        <name>Lasso</name>
        <name>LPH1-associated synaptic surface organizer</name>
        <sequence type="described" ref="VSP_045019 VSP_045020 VSP_045021 VSP_045022"/>
    </isoform>
</comment>
<comment type="tissue specificity">
    <text evidence="10">Highly expressed in heart, followed by brain, liver, kidney and fetal brain and weakly expressed in lung and testis. No expression was detected in skeletal muscle, pancreas, spleen, ovary and fetal liver.</text>
</comment>
<comment type="domain">
    <text>EGF-like domains 2 and 5 which have an odd number of cysteines might enable the formation of intermolecular disulfide bonds.</text>
</comment>
<comment type="domain">
    <text>Cytoplasmic proline-rich regions could serve as docking domains for intracellular SH3-containing proteins.</text>
</comment>
<comment type="PTM">
    <molecule>Ten-2, soluble form</molecule>
    <text evidence="3">Derives from the membrane form by proteolytic processing.</text>
</comment>
<comment type="PTM">
    <molecule>Ten-2 intracellular domain</molecule>
    <text evidence="3">Derives from the plasma membrane form by proteolytic cleavage and translocates to the nucleus. Homophilic binding of the C-terminal extracellular domain stimulates its proteolytic cleavage and release in the cytoplasmic. Is subjected to rapid degradation by the proteasome pathway (By similarity).</text>
</comment>
<comment type="similarity">
    <text evidence="12">Belongs to the tenascin family. Teneurin subfamily.</text>
</comment>
<gene>
    <name type="primary">TENM2</name>
    <name type="synonym">KIAA1127</name>
    <name type="synonym">ODZ2</name>
    <name type="synonym">TNM2</name>
</gene>
<proteinExistence type="evidence at protein level"/>
<keyword id="KW-0002">3D-structure</keyword>
<keyword id="KW-0025">Alternative splicing</keyword>
<keyword id="KW-0130">Cell adhesion</keyword>
<keyword id="KW-1003">Cell membrane</keyword>
<keyword id="KW-0966">Cell projection</keyword>
<keyword id="KW-0165">Cleavage on pair of basic residues</keyword>
<keyword id="KW-1015">Disulfide bond</keyword>
<keyword id="KW-0245">EGF-like domain</keyword>
<keyword id="KW-0256">Endoplasmic reticulum</keyword>
<keyword id="KW-0325">Glycoprotein</keyword>
<keyword id="KW-0333">Golgi apparatus</keyword>
<keyword id="KW-0472">Membrane</keyword>
<keyword id="KW-0539">Nucleus</keyword>
<keyword id="KW-0597">Phosphoprotein</keyword>
<keyword id="KW-0628">Postsynaptic cell membrane</keyword>
<keyword id="KW-1267">Proteomics identification</keyword>
<keyword id="KW-1185">Reference proteome</keyword>
<keyword id="KW-0677">Repeat</keyword>
<keyword id="KW-0678">Repressor</keyword>
<keyword id="KW-0735">Signal-anchor</keyword>
<keyword id="KW-0770">Synapse</keyword>
<keyword id="KW-0804">Transcription</keyword>
<keyword id="KW-0805">Transcription regulation</keyword>
<keyword id="KW-0812">Transmembrane</keyword>
<keyword id="KW-1133">Transmembrane helix</keyword>
<reference key="1">
    <citation type="journal article" date="2004" name="Nature">
        <title>The DNA sequence and comparative analysis of human chromosome 5.</title>
        <authorList>
            <person name="Schmutz J."/>
            <person name="Martin J."/>
            <person name="Terry A."/>
            <person name="Couronne O."/>
            <person name="Grimwood J."/>
            <person name="Lowry S."/>
            <person name="Gordon L.A."/>
            <person name="Scott D."/>
            <person name="Xie G."/>
            <person name="Huang W."/>
            <person name="Hellsten U."/>
            <person name="Tran-Gyamfi M."/>
            <person name="She X."/>
            <person name="Prabhakar S."/>
            <person name="Aerts A."/>
            <person name="Altherr M."/>
            <person name="Bajorek E."/>
            <person name="Black S."/>
            <person name="Branscomb E."/>
            <person name="Caoile C."/>
            <person name="Challacombe J.F."/>
            <person name="Chan Y.M."/>
            <person name="Denys M."/>
            <person name="Detter J.C."/>
            <person name="Escobar J."/>
            <person name="Flowers D."/>
            <person name="Fotopulos D."/>
            <person name="Glavina T."/>
            <person name="Gomez M."/>
            <person name="Gonzales E."/>
            <person name="Goodstein D."/>
            <person name="Grigoriev I."/>
            <person name="Groza M."/>
            <person name="Hammon N."/>
            <person name="Hawkins T."/>
            <person name="Haydu L."/>
            <person name="Israni S."/>
            <person name="Jett J."/>
            <person name="Kadner K."/>
            <person name="Kimball H."/>
            <person name="Kobayashi A."/>
            <person name="Lopez F."/>
            <person name="Lou Y."/>
            <person name="Martinez D."/>
            <person name="Medina C."/>
            <person name="Morgan J."/>
            <person name="Nandkeshwar R."/>
            <person name="Noonan J.P."/>
            <person name="Pitluck S."/>
            <person name="Pollard M."/>
            <person name="Predki P."/>
            <person name="Priest J."/>
            <person name="Ramirez L."/>
            <person name="Retterer J."/>
            <person name="Rodriguez A."/>
            <person name="Rogers S."/>
            <person name="Salamov A."/>
            <person name="Salazar A."/>
            <person name="Thayer N."/>
            <person name="Tice H."/>
            <person name="Tsai M."/>
            <person name="Ustaszewska A."/>
            <person name="Vo N."/>
            <person name="Wheeler J."/>
            <person name="Wu K."/>
            <person name="Yang J."/>
            <person name="Dickson M."/>
            <person name="Cheng J.-F."/>
            <person name="Eichler E.E."/>
            <person name="Olsen A."/>
            <person name="Pennacchio L.A."/>
            <person name="Rokhsar D.S."/>
            <person name="Richardson P."/>
            <person name="Lucas S.M."/>
            <person name="Myers R.M."/>
            <person name="Rubin E.M."/>
        </authorList>
    </citation>
    <scope>NUCLEOTIDE SEQUENCE [LARGE SCALE GENOMIC DNA]</scope>
</reference>
<reference key="2">
    <citation type="journal article" date="1999" name="DNA Res.">
        <title>Characterization of cDNA clones selected by the GeneMark analysis from size-fractionated cDNA libraries from human brain.</title>
        <authorList>
            <person name="Hirosawa M."/>
            <person name="Nagase T."/>
            <person name="Ishikawa K."/>
            <person name="Kikuno R."/>
            <person name="Nomura N."/>
            <person name="Ohara O."/>
        </authorList>
    </citation>
    <scope>NUCLEOTIDE SEQUENCE [LARGE SCALE MRNA] OF 631-2774 (ISOFORM 1)</scope>
    <scope>TISSUE SPECIFICITY</scope>
    <source>
        <tissue>Brain</tissue>
    </source>
</reference>
<reference key="3">
    <citation type="journal article" date="2007" name="BMC Genomics">
        <title>The full-ORF clone resource of the German cDNA consortium.</title>
        <authorList>
            <person name="Bechtel S."/>
            <person name="Rosenfelder H."/>
            <person name="Duda A."/>
            <person name="Schmidt C.P."/>
            <person name="Ernst U."/>
            <person name="Wellenreuther R."/>
            <person name="Mehrle A."/>
            <person name="Schuster C."/>
            <person name="Bahr A."/>
            <person name="Bloecker H."/>
            <person name="Heubner D."/>
            <person name="Hoerlein A."/>
            <person name="Michel G."/>
            <person name="Wedler H."/>
            <person name="Koehrer K."/>
            <person name="Ottenwaelder B."/>
            <person name="Poustka A."/>
            <person name="Wiemann S."/>
            <person name="Schupp I."/>
        </authorList>
    </citation>
    <scope>NUCLEOTIDE SEQUENCE [LARGE SCALE MRNA] OF 1926-2774 (ISOFORM 1)</scope>
    <source>
        <tissue>Amygdala</tissue>
    </source>
</reference>
<reference key="4">
    <citation type="journal article" date="2011" name="Proc. Natl. Acad. Sci. U.S.A.">
        <title>Latrophilin 1 and its endogenous ligand Lasso/teneurin-2 form a high-affinity transsynaptic receptor pair with signaling capabilities.</title>
        <authorList>
            <person name="Silva J.P."/>
            <person name="Lelianova V.G."/>
            <person name="Ermolyuk Y.S."/>
            <person name="Vysokov N."/>
            <person name="Hitchen P.G."/>
            <person name="Berninghausen O."/>
            <person name="Rahman M.A."/>
            <person name="Zangrandi A."/>
            <person name="Fidalgo S."/>
            <person name="Tonevitsky A.G."/>
            <person name="Dell A."/>
            <person name="Volynski K.E."/>
            <person name="Ushkaryov Y.A."/>
        </authorList>
    </citation>
    <scope>ALTERNATIVE SPLICING (ISOFORM 2)</scope>
    <scope>FUNCTION AS ADGRL1 LIGAND</scope>
    <scope>INTERACTION WITH ADGRL1</scope>
    <scope>SUBCELLULAR LOCATION</scope>
</reference>
<feature type="chain" id="PRO_0000259501" description="Teneurin-2">
    <location>
        <begin position="1"/>
        <end position="2774"/>
    </location>
</feature>
<feature type="chain" id="PRO_0000421011" description="Ten-2 intracellular domain" evidence="1">
    <location>
        <begin position="1"/>
        <end status="unknown"/>
    </location>
</feature>
<feature type="chain" id="PRO_0000421012" description="Ten-2, soluble form" evidence="1">
    <location>
        <begin position="529"/>
        <end position="2774"/>
    </location>
</feature>
<feature type="topological domain" description="Cytoplasmic" evidence="6">
    <location>
        <begin position="1"/>
        <end position="379"/>
    </location>
</feature>
<feature type="transmembrane region" description="Helical" evidence="6">
    <location>
        <begin position="380"/>
        <end position="400"/>
    </location>
</feature>
<feature type="topological domain" description="Extracellular" evidence="6">
    <location>
        <begin position="401"/>
        <end position="2774"/>
    </location>
</feature>
<feature type="domain" description="Teneurin N-terminal" evidence="8">
    <location>
        <begin position="1"/>
        <end position="375"/>
    </location>
</feature>
<feature type="domain" description="EGF-like 1" evidence="7">
    <location>
        <begin position="575"/>
        <end position="603"/>
    </location>
</feature>
<feature type="domain" description="EGF-like 2" evidence="7">
    <location>
        <begin position="598"/>
        <end position="634"/>
    </location>
</feature>
<feature type="domain" description="EGF-like 3" evidence="7">
    <location>
        <begin position="636"/>
        <end position="668"/>
    </location>
</feature>
<feature type="domain" description="EGF-like 4" evidence="7">
    <location>
        <begin position="669"/>
        <end position="701"/>
    </location>
</feature>
<feature type="domain" description="EGF-like 5" evidence="7">
    <location>
        <begin position="702"/>
        <end position="735"/>
    </location>
</feature>
<feature type="domain" description="EGF-like 6" evidence="7">
    <location>
        <begin position="738"/>
        <end position="766"/>
    </location>
</feature>
<feature type="domain" description="EGF-like 7" evidence="7">
    <location>
        <begin position="769"/>
        <end position="797"/>
    </location>
</feature>
<feature type="domain" description="EGF-like 8" evidence="7">
    <location>
        <begin position="808"/>
        <end position="841"/>
    </location>
</feature>
<feature type="repeat" description="NHL 1">
    <location>
        <begin position="1272"/>
        <end position="1316"/>
    </location>
</feature>
<feature type="repeat" description="NHL 2">
    <location>
        <begin position="1342"/>
        <end position="1386"/>
    </location>
</feature>
<feature type="repeat" description="NHL 3">
    <location>
        <begin position="1401"/>
        <end position="1452"/>
    </location>
</feature>
<feature type="repeat" description="NHL 4">
    <location>
        <begin position="1474"/>
        <end position="1501"/>
    </location>
</feature>
<feature type="repeat" description="NHL 5">
    <location>
        <begin position="1530"/>
        <end position="1573"/>
    </location>
</feature>
<feature type="repeat" description="YD 1">
    <location>
        <begin position="1583"/>
        <end position="1602"/>
    </location>
</feature>
<feature type="repeat" description="YD 2">
    <location>
        <begin position="1619"/>
        <end position="1639"/>
    </location>
</feature>
<feature type="repeat" description="YD 3">
    <location>
        <begin position="1682"/>
        <end position="1701"/>
    </location>
</feature>
<feature type="repeat" description="YD 4">
    <location>
        <begin position="1702"/>
        <end position="1724"/>
    </location>
</feature>
<feature type="repeat" description="YD 5">
    <location>
        <begin position="1895"/>
        <end position="1914"/>
    </location>
</feature>
<feature type="repeat" description="YD 6">
    <location>
        <begin position="1936"/>
        <end position="1954"/>
    </location>
</feature>
<feature type="repeat" description="YD 7">
    <location>
        <begin position="1955"/>
        <end position="1975"/>
    </location>
</feature>
<feature type="repeat" description="YD 8">
    <location>
        <begin position="1982"/>
        <end position="1999"/>
    </location>
</feature>
<feature type="repeat" description="YD 9">
    <location>
        <begin position="2000"/>
        <end position="2021"/>
    </location>
</feature>
<feature type="repeat" description="YD 10">
    <location>
        <begin position="2022"/>
        <end position="2039"/>
    </location>
</feature>
<feature type="repeat" description="YD 11">
    <location>
        <begin position="2042"/>
        <end position="2062"/>
    </location>
</feature>
<feature type="repeat" description="YD 12">
    <location>
        <begin position="2065"/>
        <end position="2085"/>
    </location>
</feature>
<feature type="repeat" description="YD 13">
    <location>
        <begin position="2093"/>
        <end position="2113"/>
    </location>
</feature>
<feature type="repeat" description="YD 14">
    <location>
        <begin position="2119"/>
        <end position="2136"/>
    </location>
</feature>
<feature type="repeat" description="YD 15">
    <location>
        <begin position="2137"/>
        <end position="2163"/>
    </location>
</feature>
<feature type="repeat" description="YD 16">
    <location>
        <begin position="2165"/>
        <end position="2178"/>
    </location>
</feature>
<feature type="repeat" description="YD 17">
    <location>
        <begin position="2179"/>
        <end position="2202"/>
    </location>
</feature>
<feature type="repeat" description="YD 18">
    <location>
        <begin position="2205"/>
        <end position="2225"/>
    </location>
</feature>
<feature type="repeat" description="YD 19">
    <location>
        <begin position="2226"/>
        <end position="2246"/>
    </location>
</feature>
<feature type="repeat" description="YD 20">
    <location>
        <begin position="2248"/>
        <end position="2268"/>
    </location>
</feature>
<feature type="repeat" description="YD 21">
    <location>
        <begin position="2280"/>
        <end position="2300"/>
    </location>
</feature>
<feature type="repeat" description="YD 22">
    <location>
        <begin position="2302"/>
        <end position="2322"/>
    </location>
</feature>
<feature type="repeat" description="YD 23">
    <location>
        <begin position="2348"/>
        <end position="2389"/>
    </location>
</feature>
<feature type="region of interest" description="Disordered" evidence="9">
    <location>
        <begin position="111"/>
        <end position="271"/>
    </location>
</feature>
<feature type="compositionally biased region" description="Polar residues" evidence="9">
    <location>
        <begin position="141"/>
        <end position="155"/>
    </location>
</feature>
<feature type="compositionally biased region" description="Basic and acidic residues" evidence="9">
    <location>
        <begin position="159"/>
        <end position="168"/>
    </location>
</feature>
<feature type="compositionally biased region" description="Low complexity" evidence="9">
    <location>
        <begin position="176"/>
        <end position="188"/>
    </location>
</feature>
<feature type="compositionally biased region" description="Polar residues" evidence="9">
    <location>
        <begin position="202"/>
        <end position="211"/>
    </location>
</feature>
<feature type="compositionally biased region" description="Low complexity" evidence="9">
    <location>
        <begin position="229"/>
        <end position="240"/>
    </location>
</feature>
<feature type="site" description="Cleavage" evidence="1">
    <location>
        <begin position="528"/>
        <end position="529"/>
    </location>
</feature>
<feature type="modified residue" description="Phosphoserine" evidence="5">
    <location>
        <position position="90"/>
    </location>
</feature>
<feature type="modified residue" description="Phosphoserine" evidence="2">
    <location>
        <position position="124"/>
    </location>
</feature>
<feature type="modified residue" description="Phosphothreonine" evidence="4">
    <location>
        <position position="155"/>
    </location>
</feature>
<feature type="modified residue" description="Phosphoserine" evidence="4">
    <location>
        <position position="157"/>
    </location>
</feature>
<feature type="glycosylation site" description="N-linked (GlcNAc...) asparagine" evidence="6">
    <location>
        <position position="443"/>
    </location>
</feature>
<feature type="glycosylation site" description="N-linked (GlcNAc...) asparagine" evidence="6">
    <location>
        <position position="482"/>
    </location>
</feature>
<feature type="glycosylation site" description="N-linked (GlcNAc...) asparagine" evidence="6">
    <location>
        <position position="925"/>
    </location>
</feature>
<feature type="glycosylation site" description="N-linked (GlcNAc...) asparagine" evidence="6">
    <location>
        <position position="948"/>
    </location>
</feature>
<feature type="glycosylation site" description="N-linked (GlcNAc...) asparagine" evidence="6">
    <location>
        <position position="1267"/>
    </location>
</feature>
<feature type="glycosylation site" description="N-linked (GlcNAc...) asparagine" evidence="6">
    <location>
        <position position="1616"/>
    </location>
</feature>
<feature type="glycosylation site" description="N-linked (GlcNAc...) asparagine" evidence="6">
    <location>
        <position position="1712"/>
    </location>
</feature>
<feature type="glycosylation site" description="N-linked (GlcNAc...) asparagine" evidence="6">
    <location>
        <position position="1749"/>
    </location>
</feature>
<feature type="glycosylation site" description="N-linked (GlcNAc...) asparagine" evidence="6">
    <location>
        <position position="1773"/>
    </location>
</feature>
<feature type="glycosylation site" description="N-linked (GlcNAc...) asparagine" evidence="6">
    <location>
        <position position="1807"/>
    </location>
</feature>
<feature type="glycosylation site" description="N-linked (GlcNAc...) asparagine" evidence="6">
    <location>
        <position position="1892"/>
    </location>
</feature>
<feature type="glycosylation site" description="N-linked (GlcNAc...) asparagine" evidence="6">
    <location>
        <position position="1993"/>
    </location>
</feature>
<feature type="glycosylation site" description="N-linked (GlcNAc...) asparagine" evidence="6">
    <location>
        <position position="2197"/>
    </location>
</feature>
<feature type="glycosylation site" description="N-linked (GlcNAc...) asparagine" evidence="6">
    <location>
        <position position="2337"/>
    </location>
</feature>
<feature type="glycosylation site" description="N-linked (GlcNAc...) asparagine" evidence="6">
    <location>
        <position position="2648"/>
    </location>
</feature>
<feature type="disulfide bond" evidence="7">
    <location>
        <begin position="576"/>
        <end position="586"/>
    </location>
</feature>
<feature type="disulfide bond" evidence="7">
    <location>
        <begin position="580"/>
        <end position="591"/>
    </location>
</feature>
<feature type="disulfide bond" evidence="7">
    <location>
        <begin position="593"/>
        <end position="602"/>
    </location>
</feature>
<feature type="disulfide bond" evidence="7">
    <location>
        <begin position="611"/>
        <end position="622"/>
    </location>
</feature>
<feature type="disulfide bond" evidence="7">
    <location>
        <begin position="624"/>
        <end position="633"/>
    </location>
</feature>
<feature type="disulfide bond" evidence="7">
    <location>
        <begin position="640"/>
        <end position="651"/>
    </location>
</feature>
<feature type="disulfide bond" evidence="7">
    <location>
        <begin position="645"/>
        <end position="656"/>
    </location>
</feature>
<feature type="disulfide bond" evidence="7">
    <location>
        <begin position="658"/>
        <end position="667"/>
    </location>
</feature>
<feature type="disulfide bond" evidence="7">
    <location>
        <begin position="672"/>
        <end position="683"/>
    </location>
</feature>
<feature type="disulfide bond" evidence="7">
    <location>
        <begin position="677"/>
        <end position="688"/>
    </location>
</feature>
<feature type="disulfide bond" evidence="7">
    <location>
        <begin position="690"/>
        <end position="699"/>
    </location>
</feature>
<feature type="disulfide bond" evidence="7">
    <location>
        <begin position="710"/>
        <end position="723"/>
    </location>
</feature>
<feature type="disulfide bond" evidence="7">
    <location>
        <begin position="725"/>
        <end position="734"/>
    </location>
</feature>
<feature type="disulfide bond" evidence="7">
    <location>
        <begin position="739"/>
        <end position="749"/>
    </location>
</feature>
<feature type="disulfide bond" evidence="7">
    <location>
        <begin position="743"/>
        <end position="754"/>
    </location>
</feature>
<feature type="disulfide bond" evidence="7">
    <location>
        <begin position="756"/>
        <end position="765"/>
    </location>
</feature>
<feature type="disulfide bond" evidence="7">
    <location>
        <begin position="770"/>
        <end position="780"/>
    </location>
</feature>
<feature type="disulfide bond" evidence="7">
    <location>
        <begin position="774"/>
        <end position="785"/>
    </location>
</feature>
<feature type="disulfide bond" evidence="7">
    <location>
        <begin position="787"/>
        <end position="796"/>
    </location>
</feature>
<feature type="disulfide bond" evidence="7">
    <location>
        <begin position="810"/>
        <end position="820"/>
    </location>
</feature>
<feature type="disulfide bond" evidence="7">
    <location>
        <begin position="814"/>
        <end position="829"/>
    </location>
</feature>
<feature type="disulfide bond" evidence="7">
    <location>
        <begin position="831"/>
        <end position="840"/>
    </location>
</feature>
<feature type="splice variant" id="VSP_045019" description="In isoform 2." evidence="12">
    <location>
        <begin position="1"/>
        <end position="121"/>
    </location>
</feature>
<feature type="splice variant" id="VSP_045020" description="In isoform 2." evidence="12">
    <original>GMSPEHAIRLWGRGIKSRRSSGLSSRENSALTLTDSDNENKSDDEN</original>
    <variation>MVSPPLLIISVAGTIECKPDHLLWRPGSTSPQSVSFLHGKVAMESL</variation>
    <location>
        <begin position="122"/>
        <end position="167"/>
    </location>
</feature>
<feature type="splice variant" id="VSP_045021" description="In isoform 2." evidence="12">
    <location>
        <begin position="799"/>
        <end position="807"/>
    </location>
</feature>
<feature type="splice variant" id="VSP_045022" description="In isoform 2." evidence="12">
    <location>
        <begin position="1277"/>
        <end position="1283"/>
    </location>
</feature>
<feature type="sequence variant" id="VAR_060129" description="In dbSNP:rs6862925.">
    <original>N</original>
    <variation>S</variation>
    <location>
        <position position="728"/>
    </location>
</feature>
<feature type="sequence variant" id="VAR_028946" description="In dbSNP:rs11957063.">
    <original>V</original>
    <variation>F</variation>
    <location>
        <position position="1719"/>
    </location>
</feature>
<feature type="sequence conflict" description="In Ref. 2; BAA86441." evidence="12" ref="2">
    <original>L</original>
    <variation>P</variation>
    <location>
        <position position="2384"/>
    </location>
</feature>
<feature type="strand" evidence="14">
    <location>
        <begin position="1030"/>
        <end position="1033"/>
    </location>
</feature>
<feature type="turn" evidence="14">
    <location>
        <begin position="1044"/>
        <end position="1046"/>
    </location>
</feature>
<feature type="turn" evidence="14">
    <location>
        <begin position="1051"/>
        <end position="1054"/>
    </location>
</feature>
<feature type="strand" evidence="14">
    <location>
        <begin position="1055"/>
        <end position="1061"/>
    </location>
</feature>
<feature type="strand" evidence="14">
    <location>
        <begin position="1068"/>
        <end position="1072"/>
    </location>
</feature>
<feature type="helix" evidence="13">
    <location>
        <begin position="1073"/>
        <end position="1075"/>
    </location>
</feature>
<feature type="strand" evidence="14">
    <location>
        <begin position="1083"/>
        <end position="1086"/>
    </location>
</feature>
<feature type="strand" evidence="14">
    <location>
        <begin position="1096"/>
        <end position="1105"/>
    </location>
</feature>
<feature type="strand" evidence="14">
    <location>
        <begin position="1110"/>
        <end position="1115"/>
    </location>
</feature>
<feature type="strand" evidence="14">
    <location>
        <begin position="1121"/>
        <end position="1123"/>
    </location>
</feature>
<feature type="strand" evidence="14">
    <location>
        <begin position="1138"/>
        <end position="1153"/>
    </location>
</feature>
<feature type="strand" evidence="14">
    <location>
        <begin position="1158"/>
        <end position="1169"/>
    </location>
</feature>
<feature type="strand" evidence="14">
    <location>
        <begin position="1176"/>
        <end position="1178"/>
    </location>
</feature>
<feature type="strand" evidence="14">
    <location>
        <begin position="1186"/>
        <end position="1188"/>
    </location>
</feature>
<feature type="turn" evidence="14">
    <location>
        <begin position="1189"/>
        <end position="1192"/>
    </location>
</feature>
<feature type="strand" evidence="14">
    <location>
        <begin position="1193"/>
        <end position="1195"/>
    </location>
</feature>
<feature type="strand" evidence="14">
    <location>
        <begin position="1201"/>
        <end position="1203"/>
    </location>
</feature>
<feature type="helix" evidence="14">
    <location>
        <begin position="1204"/>
        <end position="1206"/>
    </location>
</feature>
<feature type="strand" evidence="14">
    <location>
        <begin position="1210"/>
        <end position="1215"/>
    </location>
</feature>
<feature type="strand" evidence="14">
    <location>
        <begin position="1230"/>
        <end position="1232"/>
    </location>
</feature>
<feature type="strand" evidence="14">
    <location>
        <begin position="1242"/>
        <end position="1245"/>
    </location>
</feature>
<feature type="strand" evidence="14">
    <location>
        <begin position="1247"/>
        <end position="1249"/>
    </location>
</feature>
<feature type="strand" evidence="14">
    <location>
        <begin position="1251"/>
        <end position="1254"/>
    </location>
</feature>
<feature type="strand" evidence="14">
    <location>
        <begin position="1256"/>
        <end position="1262"/>
    </location>
</feature>
<feature type="strand" evidence="14">
    <location>
        <begin position="1266"/>
        <end position="1273"/>
    </location>
</feature>
<feature type="strand" evidence="14">
    <location>
        <begin position="1289"/>
        <end position="1293"/>
    </location>
</feature>
<feature type="strand" evidence="14">
    <location>
        <begin position="1295"/>
        <end position="1297"/>
    </location>
</feature>
<feature type="strand" evidence="14">
    <location>
        <begin position="1300"/>
        <end position="1304"/>
    </location>
</feature>
<feature type="turn" evidence="14">
    <location>
        <begin position="1305"/>
        <end position="1308"/>
    </location>
</feature>
<feature type="strand" evidence="14">
    <location>
        <begin position="1309"/>
        <end position="1314"/>
    </location>
</feature>
<feature type="helix" evidence="14">
    <location>
        <begin position="1343"/>
        <end position="1345"/>
    </location>
</feature>
<feature type="strand" evidence="14">
    <location>
        <begin position="1359"/>
        <end position="1363"/>
    </location>
</feature>
<feature type="strand" evidence="14">
    <location>
        <begin position="1365"/>
        <end position="1367"/>
    </location>
</feature>
<feature type="strand" evidence="14">
    <location>
        <begin position="1369"/>
        <end position="1372"/>
    </location>
</feature>
<feature type="strand" evidence="14">
    <location>
        <begin position="1377"/>
        <end position="1380"/>
    </location>
</feature>
<feature type="strand" evidence="14">
    <location>
        <begin position="1382"/>
        <end position="1386"/>
    </location>
</feature>
<feature type="strand" evidence="14">
    <location>
        <begin position="1403"/>
        <end position="1405"/>
    </location>
</feature>
<feature type="turn" evidence="14">
    <location>
        <begin position="1424"/>
        <end position="1426"/>
    </location>
</feature>
<feature type="strand" evidence="14">
    <location>
        <begin position="1429"/>
        <end position="1432"/>
    </location>
</feature>
<feature type="strand" evidence="14">
    <location>
        <begin position="1434"/>
        <end position="1440"/>
    </location>
</feature>
<feature type="strand" evidence="14">
    <location>
        <begin position="1446"/>
        <end position="1451"/>
    </location>
</feature>
<feature type="strand" evidence="14">
    <location>
        <begin position="1476"/>
        <end position="1482"/>
    </location>
</feature>
<feature type="strand" evidence="14">
    <location>
        <begin position="1488"/>
        <end position="1493"/>
    </location>
</feature>
<feature type="strand" evidence="14">
    <location>
        <begin position="1495"/>
        <end position="1497"/>
    </location>
</feature>
<feature type="strand" evidence="14">
    <location>
        <begin position="1499"/>
        <end position="1504"/>
    </location>
</feature>
<feature type="strand" evidence="14">
    <location>
        <begin position="1508"/>
        <end position="1514"/>
    </location>
</feature>
<feature type="turn" evidence="14">
    <location>
        <begin position="1522"/>
        <end position="1524"/>
    </location>
</feature>
<feature type="helix" evidence="14">
    <location>
        <begin position="1538"/>
        <end position="1540"/>
    </location>
</feature>
<feature type="strand" evidence="14">
    <location>
        <begin position="1546"/>
        <end position="1551"/>
    </location>
</feature>
<feature type="strand" evidence="14">
    <location>
        <begin position="1553"/>
        <end position="1555"/>
    </location>
</feature>
<feature type="strand" evidence="14">
    <location>
        <begin position="1557"/>
        <end position="1564"/>
    </location>
</feature>
<feature type="strand" evidence="14">
    <location>
        <begin position="1566"/>
        <end position="1571"/>
    </location>
</feature>
<feature type="strand" evidence="14">
    <location>
        <begin position="1583"/>
        <end position="1587"/>
    </location>
</feature>
<feature type="turn" evidence="14">
    <location>
        <begin position="1588"/>
        <end position="1591"/>
    </location>
</feature>
<feature type="strand" evidence="14">
    <location>
        <begin position="1592"/>
        <end position="1596"/>
    </location>
</feature>
<feature type="strand" evidence="13">
    <location>
        <begin position="1598"/>
        <end position="1600"/>
    </location>
</feature>
<feature type="strand" evidence="14">
    <location>
        <begin position="1602"/>
        <end position="1610"/>
    </location>
</feature>
<feature type="strand" evidence="14">
    <location>
        <begin position="1613"/>
        <end position="1619"/>
    </location>
</feature>
<feature type="strand" evidence="14">
    <location>
        <begin position="1625"/>
        <end position="1629"/>
    </location>
</feature>
<feature type="strand" evidence="14">
    <location>
        <begin position="1635"/>
        <end position="1640"/>
    </location>
</feature>
<feature type="strand" evidence="14">
    <location>
        <begin position="1646"/>
        <end position="1650"/>
    </location>
</feature>
<feature type="strand" evidence="14">
    <location>
        <begin position="1656"/>
        <end position="1661"/>
    </location>
</feature>
<feature type="strand" evidence="14">
    <location>
        <begin position="1665"/>
        <end position="1671"/>
    </location>
</feature>
<feature type="strand" evidence="14">
    <location>
        <begin position="1676"/>
        <end position="1683"/>
    </location>
</feature>
<feature type="strand" evidence="14">
    <location>
        <begin position="1686"/>
        <end position="1692"/>
    </location>
</feature>
<feature type="strand" evidence="14">
    <location>
        <begin position="1700"/>
        <end position="1704"/>
    </location>
</feature>
<feature type="strand" evidence="14">
    <location>
        <begin position="1710"/>
        <end position="1714"/>
    </location>
</feature>
<feature type="strand" evidence="14">
    <location>
        <begin position="1720"/>
        <end position="1740"/>
    </location>
</feature>
<feature type="strand" evidence="14">
    <location>
        <begin position="1743"/>
        <end position="1750"/>
    </location>
</feature>
<feature type="strand" evidence="14">
    <location>
        <begin position="1752"/>
        <end position="1761"/>
    </location>
</feature>
<feature type="strand" evidence="14">
    <location>
        <begin position="1764"/>
        <end position="1771"/>
    </location>
</feature>
<feature type="strand" evidence="14">
    <location>
        <begin position="1776"/>
        <end position="1779"/>
    </location>
</feature>
<feature type="strand" evidence="13">
    <location>
        <begin position="1781"/>
        <end position="1783"/>
    </location>
</feature>
<feature type="strand" evidence="14">
    <location>
        <begin position="1785"/>
        <end position="1793"/>
    </location>
</feature>
<feature type="turn" evidence="14">
    <location>
        <begin position="1794"/>
        <end position="1796"/>
    </location>
</feature>
<feature type="strand" evidence="14">
    <location>
        <begin position="1797"/>
        <end position="1809"/>
    </location>
</feature>
<feature type="strand" evidence="14">
    <location>
        <begin position="1811"/>
        <end position="1814"/>
    </location>
</feature>
<feature type="strand" evidence="14">
    <location>
        <begin position="1816"/>
        <end position="1828"/>
    </location>
</feature>
<feature type="strand" evidence="14">
    <location>
        <begin position="1831"/>
        <end position="1841"/>
    </location>
</feature>
<feature type="strand" evidence="14">
    <location>
        <begin position="1844"/>
        <end position="1852"/>
    </location>
</feature>
<feature type="turn" evidence="14">
    <location>
        <begin position="1853"/>
        <end position="1856"/>
    </location>
</feature>
<feature type="strand" evidence="14">
    <location>
        <begin position="1857"/>
        <end position="1862"/>
    </location>
</feature>
<feature type="strand" evidence="14">
    <location>
        <begin position="1868"/>
        <end position="1873"/>
    </location>
</feature>
<feature type="strand" evidence="14">
    <location>
        <begin position="1875"/>
        <end position="1877"/>
    </location>
</feature>
<feature type="strand" evidence="14">
    <location>
        <begin position="1879"/>
        <end position="1883"/>
    </location>
</feature>
<feature type="strand" evidence="14">
    <location>
        <begin position="1885"/>
        <end position="1887"/>
    </location>
</feature>
<feature type="strand" evidence="14">
    <location>
        <begin position="1891"/>
        <end position="1895"/>
    </location>
</feature>
<feature type="strand" evidence="14">
    <location>
        <begin position="1897"/>
        <end position="1899"/>
    </location>
</feature>
<feature type="strand" evidence="14">
    <location>
        <begin position="1901"/>
        <end position="1906"/>
    </location>
</feature>
<feature type="strand" evidence="14">
    <location>
        <begin position="1909"/>
        <end position="1915"/>
    </location>
</feature>
<feature type="strand" evidence="13">
    <location>
        <begin position="1917"/>
        <end position="1919"/>
    </location>
</feature>
<feature type="strand" evidence="14">
    <location>
        <begin position="1921"/>
        <end position="1926"/>
    </location>
</feature>
<feature type="strand" evidence="14">
    <location>
        <begin position="1931"/>
        <end position="1935"/>
    </location>
</feature>
<feature type="strand" evidence="14">
    <location>
        <begin position="1942"/>
        <end position="1944"/>
    </location>
</feature>
<feature type="strand" evidence="13">
    <location>
        <begin position="1946"/>
        <end position="1948"/>
    </location>
</feature>
<feature type="strand" evidence="14">
    <location>
        <begin position="1950"/>
        <end position="1955"/>
    </location>
</feature>
<feature type="strand" evidence="13">
    <location>
        <begin position="1957"/>
        <end position="1959"/>
    </location>
</feature>
<feature type="strand" evidence="14">
    <location>
        <begin position="1961"/>
        <end position="1965"/>
    </location>
</feature>
<feature type="strand" evidence="14">
    <location>
        <begin position="1967"/>
        <end position="1969"/>
    </location>
</feature>
<feature type="strand" evidence="14">
    <location>
        <begin position="1971"/>
        <end position="1979"/>
    </location>
</feature>
<feature type="strand" evidence="14">
    <location>
        <begin position="1982"/>
        <end position="1988"/>
    </location>
</feature>
<feature type="strand" evidence="14">
    <location>
        <begin position="1996"/>
        <end position="2000"/>
    </location>
</feature>
<feature type="strand" evidence="13">
    <location>
        <begin position="2002"/>
        <end position="2004"/>
    </location>
</feature>
<feature type="strand" evidence="14">
    <location>
        <begin position="2006"/>
        <end position="2011"/>
    </location>
</feature>
<feature type="turn" evidence="14">
    <location>
        <begin position="2012"/>
        <end position="2015"/>
    </location>
</feature>
<feature type="strand" evidence="14">
    <location>
        <begin position="2016"/>
        <end position="2022"/>
    </location>
</feature>
<feature type="strand" evidence="14">
    <location>
        <begin position="2026"/>
        <end position="2033"/>
    </location>
</feature>
<feature type="strand" evidence="14">
    <location>
        <begin position="2036"/>
        <end position="2042"/>
    </location>
</feature>
<feature type="turn" evidence="14">
    <location>
        <begin position="2044"/>
        <end position="2046"/>
    </location>
</feature>
<feature type="strand" evidence="14">
    <location>
        <begin position="2049"/>
        <end position="2056"/>
    </location>
</feature>
<feature type="strand" evidence="14">
    <location>
        <begin position="2059"/>
        <end position="2068"/>
    </location>
</feature>
<feature type="strand" evidence="14">
    <location>
        <begin position="2071"/>
        <end position="2079"/>
    </location>
</feature>
<feature type="strand" evidence="14">
    <location>
        <begin position="2081"/>
        <end position="2083"/>
    </location>
</feature>
<feature type="strand" evidence="14">
    <location>
        <begin position="2087"/>
        <end position="2093"/>
    </location>
</feature>
<feature type="strand" evidence="14">
    <location>
        <begin position="2100"/>
        <end position="2107"/>
    </location>
</feature>
<feature type="strand" evidence="14">
    <location>
        <begin position="2115"/>
        <end position="2119"/>
    </location>
</feature>
<feature type="turn" evidence="14">
    <location>
        <begin position="2121"/>
        <end position="2123"/>
    </location>
</feature>
<feature type="strand" evidence="14">
    <location>
        <begin position="2126"/>
        <end position="2129"/>
    </location>
</feature>
<feature type="strand" evidence="14">
    <location>
        <begin position="2132"/>
        <end position="2137"/>
    </location>
</feature>
<feature type="strand" evidence="14">
    <location>
        <begin position="2140"/>
        <end position="2144"/>
    </location>
</feature>
<feature type="strand" evidence="14">
    <location>
        <begin position="2146"/>
        <end position="2154"/>
    </location>
</feature>
<feature type="strand" evidence="13">
    <location>
        <begin position="2156"/>
        <end position="2158"/>
    </location>
</feature>
<feature type="strand" evidence="14">
    <location>
        <begin position="2160"/>
        <end position="2167"/>
    </location>
</feature>
<feature type="strand" evidence="14">
    <location>
        <begin position="2170"/>
        <end position="2179"/>
    </location>
</feature>
<feature type="strand" evidence="14">
    <location>
        <begin position="2185"/>
        <end position="2195"/>
    </location>
</feature>
<feature type="strand" evidence="14">
    <location>
        <begin position="2199"/>
        <end position="2205"/>
    </location>
</feature>
<feature type="strand" evidence="14">
    <location>
        <begin position="2207"/>
        <end position="2209"/>
    </location>
</feature>
<feature type="strand" evidence="14">
    <location>
        <begin position="2211"/>
        <end position="2216"/>
    </location>
</feature>
<feature type="strand" evidence="14">
    <location>
        <begin position="2219"/>
        <end position="2223"/>
    </location>
</feature>
<feature type="strand" evidence="14">
    <location>
        <begin position="2232"/>
        <end position="2235"/>
    </location>
</feature>
<feature type="strand" evidence="14">
    <location>
        <begin position="2244"/>
        <end position="2248"/>
    </location>
</feature>
<feature type="strand" evidence="13">
    <location>
        <begin position="2250"/>
        <end position="2252"/>
    </location>
</feature>
<feature type="strand" evidence="14">
    <location>
        <begin position="2254"/>
        <end position="2257"/>
    </location>
</feature>
<feature type="strand" evidence="14">
    <location>
        <begin position="2260"/>
        <end position="2264"/>
    </location>
</feature>
<feature type="strand" evidence="14">
    <location>
        <begin position="2269"/>
        <end position="2273"/>
    </location>
</feature>
<feature type="strand" evidence="14">
    <location>
        <begin position="2276"/>
        <end position="2280"/>
    </location>
</feature>
<feature type="strand" evidence="14">
    <location>
        <begin position="2286"/>
        <end position="2291"/>
    </location>
</feature>
<feature type="turn" evidence="14">
    <location>
        <begin position="2292"/>
        <end position="2295"/>
    </location>
</feature>
<feature type="strand" evidence="14">
    <location>
        <begin position="2296"/>
        <end position="2302"/>
    </location>
</feature>
<feature type="strand" evidence="14">
    <location>
        <begin position="2304"/>
        <end position="2306"/>
    </location>
</feature>
<feature type="strand" evidence="14">
    <location>
        <begin position="2308"/>
        <end position="2313"/>
    </location>
</feature>
<feature type="strand" evidence="14">
    <location>
        <begin position="2318"/>
        <end position="2322"/>
    </location>
</feature>
<feature type="strand" evidence="13">
    <location>
        <begin position="2326"/>
        <end position="2328"/>
    </location>
</feature>
<feature type="strand" evidence="14">
    <location>
        <begin position="2334"/>
        <end position="2337"/>
    </location>
</feature>
<feature type="turn" evidence="14">
    <location>
        <begin position="2338"/>
        <end position="2341"/>
    </location>
</feature>
<feature type="strand" evidence="14">
    <location>
        <begin position="2342"/>
        <end position="2348"/>
    </location>
</feature>
<feature type="strand" evidence="14">
    <location>
        <begin position="2350"/>
        <end position="2352"/>
    </location>
</feature>
<feature type="strand" evidence="14">
    <location>
        <begin position="2354"/>
        <end position="2359"/>
    </location>
</feature>
<feature type="strand" evidence="13">
    <location>
        <begin position="2360"/>
        <end position="2362"/>
    </location>
</feature>
<feature type="strand" evidence="14">
    <location>
        <begin position="2364"/>
        <end position="2369"/>
    </location>
</feature>
<feature type="strand" evidence="13">
    <location>
        <begin position="2371"/>
        <end position="2373"/>
    </location>
</feature>
<feature type="strand" evidence="14">
    <location>
        <begin position="2375"/>
        <end position="2380"/>
    </location>
</feature>
<feature type="strand" evidence="13">
    <location>
        <begin position="2381"/>
        <end position="2383"/>
    </location>
</feature>
<feature type="strand" evidence="14">
    <location>
        <begin position="2385"/>
        <end position="2391"/>
    </location>
</feature>
<feature type="strand" evidence="14">
    <location>
        <begin position="2397"/>
        <end position="2401"/>
    </location>
</feature>
<feature type="strand" evidence="13">
    <location>
        <begin position="2403"/>
        <end position="2405"/>
    </location>
</feature>
<feature type="helix" evidence="14">
    <location>
        <begin position="2411"/>
        <end position="2413"/>
    </location>
</feature>
<feature type="strand" evidence="14">
    <location>
        <begin position="2414"/>
        <end position="2417"/>
    </location>
</feature>
<feature type="turn" evidence="14">
    <location>
        <begin position="2418"/>
        <end position="2421"/>
    </location>
</feature>
<feature type="strand" evidence="14">
    <location>
        <begin position="2422"/>
        <end position="2425"/>
    </location>
</feature>
<feature type="strand" evidence="14">
    <location>
        <begin position="2428"/>
        <end position="2431"/>
    </location>
</feature>
<feature type="turn" evidence="14">
    <location>
        <begin position="2432"/>
        <end position="2435"/>
    </location>
</feature>
<feature type="strand" evidence="14">
    <location>
        <begin position="2436"/>
        <end position="2439"/>
    </location>
</feature>
<feature type="helix" evidence="14">
    <location>
        <begin position="2442"/>
        <end position="2447"/>
    </location>
</feature>
<feature type="turn" evidence="14">
    <location>
        <begin position="2448"/>
        <end position="2450"/>
    </location>
</feature>
<feature type="strand" evidence="14">
    <location>
        <begin position="2457"/>
        <end position="2460"/>
    </location>
</feature>
<feature type="helix" evidence="14">
    <location>
        <begin position="2461"/>
        <end position="2463"/>
    </location>
</feature>
<feature type="helix" evidence="14">
    <location>
        <begin position="2472"/>
        <end position="2474"/>
    </location>
</feature>
<feature type="helix" evidence="14">
    <location>
        <begin position="2480"/>
        <end position="2485"/>
    </location>
</feature>
<feature type="helix" evidence="14">
    <location>
        <begin position="2490"/>
        <end position="2492"/>
    </location>
</feature>
<feature type="helix" evidence="14">
    <location>
        <begin position="2509"/>
        <end position="2515"/>
    </location>
</feature>
<feature type="turn" evidence="13">
    <location>
        <begin position="2516"/>
        <end position="2518"/>
    </location>
</feature>
<feature type="helix" evidence="14">
    <location>
        <begin position="2525"/>
        <end position="2537"/>
    </location>
</feature>
<feature type="strand" evidence="14">
    <location>
        <begin position="2542"/>
        <end position="2544"/>
    </location>
</feature>
<feature type="strand" evidence="13">
    <location>
        <begin position="2556"/>
        <end position="2558"/>
    </location>
</feature>
<feature type="strand" evidence="14">
    <location>
        <begin position="2572"/>
        <end position="2585"/>
    </location>
</feature>
<feature type="helix" evidence="14">
    <location>
        <begin position="2591"/>
        <end position="2600"/>
    </location>
</feature>
<feature type="strand" evidence="14">
    <location>
        <begin position="2611"/>
        <end position="2613"/>
    </location>
</feature>
<feature type="strand" evidence="14">
    <location>
        <begin position="2616"/>
        <end position="2625"/>
    </location>
</feature>
<feature type="helix" evidence="14">
    <location>
        <begin position="2627"/>
        <end position="2634"/>
    </location>
</feature>
<feature type="strand" evidence="14">
    <location>
        <begin position="2637"/>
        <end position="2642"/>
    </location>
</feature>
<feature type="strand" evidence="14">
    <location>
        <begin position="2648"/>
        <end position="2652"/>
    </location>
</feature>
<feature type="strand" evidence="14">
    <location>
        <begin position="2655"/>
        <end position="2658"/>
    </location>
</feature>
<feature type="strand" evidence="14">
    <location>
        <begin position="2661"/>
        <end position="2664"/>
    </location>
</feature>
<feature type="strand" evidence="14">
    <location>
        <begin position="2666"/>
        <end position="2672"/>
    </location>
</feature>
<feature type="strand" evidence="14">
    <location>
        <begin position="2675"/>
        <end position="2681"/>
    </location>
</feature>
<feature type="helix" evidence="14">
    <location>
        <begin position="2685"/>
        <end position="2687"/>
    </location>
</feature>
<feature type="helix" evidence="14">
    <location>
        <begin position="2689"/>
        <end position="2717"/>
    </location>
</feature>
<feature type="helix" evidence="14">
    <location>
        <begin position="2729"/>
        <end position="2735"/>
    </location>
</feature>
<feature type="strand" evidence="14">
    <location>
        <begin position="2736"/>
        <end position="2738"/>
    </location>
</feature>
<feature type="strand" evidence="14">
    <location>
        <begin position="2742"/>
        <end position="2748"/>
    </location>
</feature>
<feature type="turn" evidence="14">
    <location>
        <begin position="2750"/>
        <end position="2752"/>
    </location>
</feature>
<feature type="helix" evidence="14">
    <location>
        <begin position="2754"/>
        <end position="2756"/>
    </location>
</feature>
<feature type="helix" evidence="14">
    <location>
        <begin position="2760"/>
        <end position="2762"/>
    </location>
</feature>
<feature type="strand" evidence="14">
    <location>
        <begin position="2763"/>
        <end position="2768"/>
    </location>
</feature>
<organism>
    <name type="scientific">Homo sapiens</name>
    <name type="common">Human</name>
    <dbReference type="NCBI Taxonomy" id="9606"/>
    <lineage>
        <taxon>Eukaryota</taxon>
        <taxon>Metazoa</taxon>
        <taxon>Chordata</taxon>
        <taxon>Craniata</taxon>
        <taxon>Vertebrata</taxon>
        <taxon>Euteleostomi</taxon>
        <taxon>Mammalia</taxon>
        <taxon>Eutheria</taxon>
        <taxon>Euarchontoglires</taxon>
        <taxon>Primates</taxon>
        <taxon>Haplorrhini</taxon>
        <taxon>Catarrhini</taxon>
        <taxon>Hominidae</taxon>
        <taxon>Homo</taxon>
    </lineage>
</organism>
<accession>Q9NT68</accession>
<accession>Q9ULU2</accession>
<name>TEN2_HUMAN</name>
<evidence type="ECO:0000250" key="1"/>
<evidence type="ECO:0000250" key="2">
    <source>
        <dbReference type="UniProtKB" id="Q3UHK6"/>
    </source>
</evidence>
<evidence type="ECO:0000250" key="3">
    <source>
        <dbReference type="UniProtKB" id="Q9DER5"/>
    </source>
</evidence>
<evidence type="ECO:0000250" key="4">
    <source>
        <dbReference type="UniProtKB" id="Q9R1K2"/>
    </source>
</evidence>
<evidence type="ECO:0000250" key="5">
    <source>
        <dbReference type="UniProtKB" id="Q9WTS5"/>
    </source>
</evidence>
<evidence type="ECO:0000255" key="6"/>
<evidence type="ECO:0000255" key="7">
    <source>
        <dbReference type="PROSITE-ProRule" id="PRU00076"/>
    </source>
</evidence>
<evidence type="ECO:0000255" key="8">
    <source>
        <dbReference type="PROSITE-ProRule" id="PRU00694"/>
    </source>
</evidence>
<evidence type="ECO:0000256" key="9">
    <source>
        <dbReference type="SAM" id="MobiDB-lite"/>
    </source>
</evidence>
<evidence type="ECO:0000269" key="10">
    <source>
    </source>
</evidence>
<evidence type="ECO:0000269" key="11">
    <source>
    </source>
</evidence>
<evidence type="ECO:0000305" key="12"/>
<evidence type="ECO:0007829" key="13">
    <source>
        <dbReference type="PDB" id="6CMX"/>
    </source>
</evidence>
<evidence type="ECO:0007829" key="14">
    <source>
        <dbReference type="PDB" id="6VHH"/>
    </source>
</evidence>
<sequence length="2774" mass="307787">MDVKDRRHRSLTRGRCGKECRYTSSSLDSEDCRVPTQKSYSSSETLKAYDHDSRMHYGNRVTDLIHRESDEFPRQGTNFTLAELGICEPSPHRSGYCSDMGILHQGYSLSTGSDADSDTEGGMSPEHAIRLWGRGIKSRRSSGLSSRENSALTLTDSDNENKSDDENGRPIPPTSSPSLLPSAQLPSSHNPPPVSCQMPLLDSNTSHQIMDTNPDEEFSPNSYLLRACSGPQQASSSGPPNHHSQSTLRPPLPPPHNHTLSHHHSSANSLNRNSLTNRRSQIHAPAPAPNDLATTPESVQLQDSWVLNSNVPLETRHFLFKTSSGSTPLFSSSSPGYPLTSGTVYTPPPRLLPRNTFSRKAFKLKKPSKYCSWKCAALSAIAAALLLAILLAYFIAMHLLGLNWQLQPADGHTFNNGIRTGLPGNDDVATMPSGGKVPWSLKNSSIDSGEAEVGRRVTQEVPPGVFWRSQIHISQPQFLKFNISLGKDALFGVYIRRGLPPSHAQYDFMERLDGKEKWSVVESPRERRSIQTLVQNEAVFVQYLDVGLWHLAFYNDGKDKEMVSFNTVVLDSVQDCPRNCHGNGECVSGVCHCFPGFLGADCAKAACPVLCSGNGQYSKGTCQCYSGWKGAECDVPMNQCIDPSCGGHGSCIDGNCVCSAGYKGEHCEEVDCLDPTCSSHGVCVNGECLCSPGWGGLNCELARVQCPDQCSGHGTYLPDTGLCSCDPNWMGPDCSVEVCSVDCGTHGVCIGGACRCEEGWTGAACDQRVCHPRCIEHGTCKDGKCECREGWNGEHCTIGRQTAGTETDGCPDLCNGNGRCTLGQNSWQCVCQTGWRGPGCNVAMETSCADNKDNEGDGLVDCLDPDCCLQSACQNSLLCRGSRDPLDIIQQGQTDWPAVKSFYDRIKLLAGKDSTHIIPGENPFNSSLVSLIRGQVVTTDGTPLVGVNVSFVKYPKYGYTITRQDGTFDLIANGGASLTLHFERAPFMSQERTVWLPWNSFYAMDTLVMKTEENSIPSCDLSGFVRPDPIIISSPLSTFFSAAPGQNPIVPETQVLHEEIELPGSNVKLRYLSSRTAGYKSLLKITMTQSTVPLNLIRVHLMVAVEGHLFQKSFQASPNLAYTFIWDKTDAYGQRVYGLSDAVVSVGFEYETCPSLILWEKRTALLQGFELDPSNLGGWSLDKHHILNVKSGILHKGTGENQFLTQQPAIITSIMGNGRRRSISCPSCNGLAEGNKLLAPVALAVGIDGSLYVGDFNYIRRIFPSRNVTSILELRNKEFKHSNNPAHKYYLAVDPVSGSLYVSDTNSRRIYRVKSLSGTKDLAGNSEVVAGTGEQCLPFDEARCGDGGKAIDATLMSPRGIAVDKNGLMYFVDATMIRKVDQNGIISTLLGSNDLTAVRPLSCDSSMDVAQVRLEWPTDLAVNPMDNSLYVLENNVILRITENHQVSIIAGRPMHCQVPGIDYSLSKLAIHSALESASAIAISHTGVLYITETDEKKINRLRQVTTNGEICLLAGAASDCDCKNDVNCNCYSGDDAYATDAILNSPSSLAVAPDGTIYIADLGNIRIRAVSKNKPVLNAFNQYEAASPGEQELYVFNADGIHQYTVSLVTGEYLYNFTYSTDNDVTELIDNNGNSLKIRRDSSGMPRHLLMPDNQIITLTVGTNGGLKVVSTQNLELGLMTYDGNTGLLATKSDETGWTTFYDYDHEGRLTNVTRPTGVVTSLHREMEKSITIDIENSNRDDDVTVITNLSSVEASYTVVQDQVRNSYQLCNNGTLRVMYANGMGISFHSEPHVLAGTITPTIGRCNISLPMENGLNSIEWRLRKEQIKGKVTIFGRKLRVHGRNLLSIDYDRNIRTEKIYDDHRKFTLRIIYDQVGRPFLWLPSSGLAAVNVSYFFNGRLAGLQRGAMSERTDIDKQGRIVSRMFADGKVWSYSYLDKSMVLLLQSQRQYIFEYDSSDRLLAVTMPSVARHSMSTHTSIGYIRNIYNPPESNASVIFDYSDDGRILKTSFLGTGRQVFYKYGKLSKLSEIVYDSTAVTFGYDETTGVLKMVNLQSGGFSCTIRYRKIGPLVDKQIYRFSEEGMVNARFDYTYHDNSFRIASIKPVISETPLPVDLYRYDEISGKVEHFGKFGVIYYDINQIITTAVMTLSKHFDTHGRIKEVQYEMFRSLMYWMTVQYDSMGRVIKRELKLGPYANTTKYTYDYDGDGQLQSVAVNDRPTWRYSYDLNGNLHLLNPGNSVRLMPLRYDLRDRITRLGDVQYKIDDDGYLCQRGSDIFEYNSKGLLTRAYNKASGWSVQYRYDGVGRRASYKTNLGHHLQYFYSDLHNPTRITHVYNHSNSEITSLYYDLQGHLFAMESSSGEEYYVASDNTGTPLAVFSINGLMIKQLQYTAYGEIYYDSNPDFQMVIGFHGGLYDPLTKLVHFTQRDYDVLAGRWTSPDYTMWKNVGKEPAPFNLYMFKSNNPLSSELDLKNYVTDVKSWLVMFGFQLSNIIPGFPRAKMYFVPPPYELSESQASENGQLITGVQQTTERHNQAFMALEGQVITKKLHASIREKAGHWFATTTPIIGKGIMFAIKEGRVTTGVSSIASEDSRKVASVLNNAYYLDKMHYSIEGKDTHYFVKIGSADGDLVTLGTTIGRKVLESGVNVTVSQPTLLVNGRTRRFTNIEFQYSTLLLSIRYGLTPDTLDEEKARVLDQARQRALGTAWAKEQQKARDGREGSRLWTEGEKQQLLSTGRVQGYEGYYVLPVEQYPELADSSSNIQFLRQNEMGKR</sequence>
<dbReference type="EMBL" id="AC008464">
    <property type="status" value="NOT_ANNOTATED_CDS"/>
    <property type="molecule type" value="Genomic_DNA"/>
</dbReference>
<dbReference type="EMBL" id="AC008601">
    <property type="status" value="NOT_ANNOTATED_CDS"/>
    <property type="molecule type" value="Genomic_DNA"/>
</dbReference>
<dbReference type="EMBL" id="AC008634">
    <property type="status" value="NOT_ANNOTATED_CDS"/>
    <property type="molecule type" value="Genomic_DNA"/>
</dbReference>
<dbReference type="EMBL" id="AC008637">
    <property type="status" value="NOT_ANNOTATED_CDS"/>
    <property type="molecule type" value="Genomic_DNA"/>
</dbReference>
<dbReference type="EMBL" id="AC008642">
    <property type="status" value="NOT_ANNOTATED_CDS"/>
    <property type="molecule type" value="Genomic_DNA"/>
</dbReference>
<dbReference type="EMBL" id="AC008705">
    <property type="status" value="NOT_ANNOTATED_CDS"/>
    <property type="molecule type" value="Genomic_DNA"/>
</dbReference>
<dbReference type="EMBL" id="AC008708">
    <property type="status" value="NOT_ANNOTATED_CDS"/>
    <property type="molecule type" value="Genomic_DNA"/>
</dbReference>
<dbReference type="EMBL" id="AC011369">
    <property type="status" value="NOT_ANNOTATED_CDS"/>
    <property type="molecule type" value="Genomic_DNA"/>
</dbReference>
<dbReference type="EMBL" id="AC011384">
    <property type="status" value="NOT_ANNOTATED_CDS"/>
    <property type="molecule type" value="Genomic_DNA"/>
</dbReference>
<dbReference type="EMBL" id="AC026689">
    <property type="status" value="NOT_ANNOTATED_CDS"/>
    <property type="molecule type" value="Genomic_DNA"/>
</dbReference>
<dbReference type="EMBL" id="AC091820">
    <property type="status" value="NOT_ANNOTATED_CDS"/>
    <property type="molecule type" value="Genomic_DNA"/>
</dbReference>
<dbReference type="EMBL" id="AC093304">
    <property type="status" value="NOT_ANNOTATED_CDS"/>
    <property type="molecule type" value="Genomic_DNA"/>
</dbReference>
<dbReference type="EMBL" id="AC113372">
    <property type="status" value="NOT_ANNOTATED_CDS"/>
    <property type="molecule type" value="Genomic_DNA"/>
</dbReference>
<dbReference type="EMBL" id="AB032953">
    <property type="protein sequence ID" value="BAA86441.2"/>
    <property type="molecule type" value="mRNA"/>
</dbReference>
<dbReference type="EMBL" id="AL137500">
    <property type="protein sequence ID" value="CAB70774.1"/>
    <property type="molecule type" value="mRNA"/>
</dbReference>
<dbReference type="CCDS" id="CCDS93818.1">
    <molecule id="Q9NT68-1"/>
</dbReference>
<dbReference type="PIR" id="T46253">
    <property type="entry name" value="T46253"/>
</dbReference>
<dbReference type="RefSeq" id="NP_001073897.2">
    <property type="nucleotide sequence ID" value="NM_001080428.2"/>
</dbReference>
<dbReference type="RefSeq" id="NP_001382389.1">
    <molecule id="Q9NT68-1"/>
    <property type="nucleotide sequence ID" value="NM_001395460.1"/>
</dbReference>
<dbReference type="RefSeq" id="XP_016865149.1">
    <property type="nucleotide sequence ID" value="XM_017009660.1"/>
</dbReference>
<dbReference type="PDB" id="6CMX">
    <property type="method" value="EM"/>
    <property type="resolution" value="3.10 A"/>
    <property type="chains" value="A=846-2774"/>
</dbReference>
<dbReference type="PDB" id="6VHH">
    <property type="method" value="EM"/>
    <property type="resolution" value="2.97 A"/>
    <property type="chains" value="A=846-2774"/>
</dbReference>
<dbReference type="PDBsum" id="6CMX"/>
<dbReference type="PDBsum" id="6VHH"/>
<dbReference type="EMDB" id="EMD-21205"/>
<dbReference type="EMDB" id="EMD-7526"/>
<dbReference type="SMR" id="Q9NT68"/>
<dbReference type="FunCoup" id="Q9NT68">
    <property type="interactions" value="422"/>
</dbReference>
<dbReference type="IntAct" id="Q9NT68">
    <property type="interactions" value="7"/>
</dbReference>
<dbReference type="STRING" id="9606.ENSP00000427874"/>
<dbReference type="TCDB" id="9.B.87.1.20">
    <property type="family name" value="the selenoprotein p receptor (selp-receptor) family"/>
</dbReference>
<dbReference type="GlyConnect" id="1796">
    <property type="glycosylation" value="6 N-Linked glycans (1 site)"/>
</dbReference>
<dbReference type="GlyCosmos" id="Q9NT68">
    <property type="glycosylation" value="15 sites, 6 glycans"/>
</dbReference>
<dbReference type="GlyGen" id="Q9NT68">
    <property type="glycosylation" value="19 sites, 10 N-linked glycans (2 sites), 1 O-linked glycan (1 site)"/>
</dbReference>
<dbReference type="iPTMnet" id="Q9NT68"/>
<dbReference type="PhosphoSitePlus" id="Q9NT68"/>
<dbReference type="BioMuta" id="TENM2"/>
<dbReference type="DMDM" id="290457667"/>
<dbReference type="jPOST" id="Q9NT68"/>
<dbReference type="MassIVE" id="Q9NT68"/>
<dbReference type="PaxDb" id="9606-ENSP00000429430"/>
<dbReference type="PeptideAtlas" id="Q9NT68"/>
<dbReference type="ProteomicsDB" id="82603">
    <molecule id="Q9NT68-1"/>
</dbReference>
<dbReference type="ABCD" id="Q9NT68">
    <property type="antibodies" value="13 sequenced antibodies"/>
</dbReference>
<dbReference type="Antibodypedia" id="49097">
    <property type="antibodies" value="20 antibodies from 6 providers"/>
</dbReference>
<dbReference type="DNASU" id="57451"/>
<dbReference type="Ensembl" id="ENST00000518659.6">
    <molecule id="Q9NT68-1"/>
    <property type="protein sequence ID" value="ENSP00000429430.1"/>
    <property type="gene ID" value="ENSG00000145934.17"/>
</dbReference>
<dbReference type="GeneID" id="57451"/>
<dbReference type="KEGG" id="hsa:57451"/>
<dbReference type="MANE-Select" id="ENST00000518659.6">
    <property type="protein sequence ID" value="ENSP00000429430.1"/>
    <property type="RefSeq nucleotide sequence ID" value="NM_001395460.1"/>
    <property type="RefSeq protein sequence ID" value="NP_001382389.1"/>
</dbReference>
<dbReference type="UCSC" id="uc031slx.2">
    <molecule id="Q9NT68-1"/>
    <property type="organism name" value="human"/>
</dbReference>
<dbReference type="AGR" id="HGNC:29943"/>
<dbReference type="CTD" id="57451"/>
<dbReference type="DisGeNET" id="57451"/>
<dbReference type="GeneCards" id="TENM2"/>
<dbReference type="HGNC" id="HGNC:29943">
    <property type="gene designation" value="TENM2"/>
</dbReference>
<dbReference type="HPA" id="ENSG00000145934">
    <property type="expression patterns" value="Tissue enriched (heart)"/>
</dbReference>
<dbReference type="MIM" id="610119">
    <property type="type" value="gene"/>
</dbReference>
<dbReference type="neXtProt" id="NX_Q9NT68"/>
<dbReference type="OpenTargets" id="ENSG00000145934"/>
<dbReference type="VEuPathDB" id="HostDB:ENSG00000145934"/>
<dbReference type="eggNOG" id="KOG1225">
    <property type="taxonomic scope" value="Eukaryota"/>
</dbReference>
<dbReference type="eggNOG" id="KOG4659">
    <property type="taxonomic scope" value="Eukaryota"/>
</dbReference>
<dbReference type="GeneTree" id="ENSGT01030000234566"/>
<dbReference type="InParanoid" id="Q9NT68"/>
<dbReference type="OMA" id="HWTQSAP"/>
<dbReference type="OrthoDB" id="9514875at2759"/>
<dbReference type="PAN-GO" id="Q9NT68">
    <property type="GO annotations" value="6 GO annotations based on evolutionary models"/>
</dbReference>
<dbReference type="PhylomeDB" id="Q9NT68"/>
<dbReference type="TreeFam" id="TF316833"/>
<dbReference type="PathwayCommons" id="Q9NT68"/>
<dbReference type="SignaLink" id="Q9NT68"/>
<dbReference type="BioGRID-ORCS" id="57451">
    <property type="hits" value="8 hits in 381 CRISPR screens"/>
</dbReference>
<dbReference type="ChiTaRS" id="TENM2">
    <property type="organism name" value="human"/>
</dbReference>
<dbReference type="GenomeRNAi" id="57451"/>
<dbReference type="Pharos" id="Q9NT68">
    <property type="development level" value="Tbio"/>
</dbReference>
<dbReference type="PRO" id="PR:Q9NT68"/>
<dbReference type="Proteomes" id="UP000005640">
    <property type="component" value="Chromosome 5"/>
</dbReference>
<dbReference type="RNAct" id="Q9NT68">
    <property type="molecule type" value="protein"/>
</dbReference>
<dbReference type="Bgee" id="ENSG00000145934">
    <property type="expression patterns" value="Expressed in left ventricle myocardium and 157 other cell types or tissues"/>
</dbReference>
<dbReference type="ExpressionAtlas" id="Q9NT68">
    <property type="expression patterns" value="baseline and differential"/>
</dbReference>
<dbReference type="GO" id="GO:0030054">
    <property type="term" value="C:cell junction"/>
    <property type="evidence" value="ECO:0000250"/>
    <property type="project" value="UniProtKB"/>
</dbReference>
<dbReference type="GO" id="GO:0005911">
    <property type="term" value="C:cell-cell junction"/>
    <property type="evidence" value="ECO:0000314"/>
    <property type="project" value="UniProtKB"/>
</dbReference>
<dbReference type="GO" id="GO:0030425">
    <property type="term" value="C:dendrite"/>
    <property type="evidence" value="ECO:0000250"/>
    <property type="project" value="UniProtKB"/>
</dbReference>
<dbReference type="GO" id="GO:0043197">
    <property type="term" value="C:dendritic spine"/>
    <property type="evidence" value="ECO:0000250"/>
    <property type="project" value="UniProtKB"/>
</dbReference>
<dbReference type="GO" id="GO:0005783">
    <property type="term" value="C:endoplasmic reticulum"/>
    <property type="evidence" value="ECO:0000250"/>
    <property type="project" value="UniProtKB"/>
</dbReference>
<dbReference type="GO" id="GO:0030175">
    <property type="term" value="C:filopodium"/>
    <property type="evidence" value="ECO:0000250"/>
    <property type="project" value="UniProtKB"/>
</dbReference>
<dbReference type="GO" id="GO:0005794">
    <property type="term" value="C:Golgi apparatus"/>
    <property type="evidence" value="ECO:0000250"/>
    <property type="project" value="UniProtKB"/>
</dbReference>
<dbReference type="GO" id="GO:0030426">
    <property type="term" value="C:growth cone"/>
    <property type="evidence" value="ECO:0000250"/>
    <property type="project" value="UniProtKB"/>
</dbReference>
<dbReference type="GO" id="GO:0043005">
    <property type="term" value="C:neuron projection"/>
    <property type="evidence" value="ECO:0000250"/>
    <property type="project" value="UniProtKB"/>
</dbReference>
<dbReference type="GO" id="GO:0005634">
    <property type="term" value="C:nucleus"/>
    <property type="evidence" value="ECO:0000250"/>
    <property type="project" value="UniProtKB"/>
</dbReference>
<dbReference type="GO" id="GO:0005886">
    <property type="term" value="C:plasma membrane"/>
    <property type="evidence" value="ECO:0000314"/>
    <property type="project" value="UniProtKB"/>
</dbReference>
<dbReference type="GO" id="GO:0016605">
    <property type="term" value="C:PML body"/>
    <property type="evidence" value="ECO:0000250"/>
    <property type="project" value="UniProtKB"/>
</dbReference>
<dbReference type="GO" id="GO:0045211">
    <property type="term" value="C:postsynaptic membrane"/>
    <property type="evidence" value="ECO:0000250"/>
    <property type="project" value="UniProtKB"/>
</dbReference>
<dbReference type="GO" id="GO:0045202">
    <property type="term" value="C:synapse"/>
    <property type="evidence" value="ECO:0000250"/>
    <property type="project" value="UniProtKB"/>
</dbReference>
<dbReference type="GO" id="GO:0005509">
    <property type="term" value="F:calcium ion binding"/>
    <property type="evidence" value="ECO:0007669"/>
    <property type="project" value="InterPro"/>
</dbReference>
<dbReference type="GO" id="GO:0050839">
    <property type="term" value="F:cell adhesion molecule binding"/>
    <property type="evidence" value="ECO:0000314"/>
    <property type="project" value="UniProtKB"/>
</dbReference>
<dbReference type="GO" id="GO:0046982">
    <property type="term" value="F:protein heterodimerization activity"/>
    <property type="evidence" value="ECO:0000250"/>
    <property type="project" value="UniProtKB"/>
</dbReference>
<dbReference type="GO" id="GO:0042803">
    <property type="term" value="F:protein homodimerization activity"/>
    <property type="evidence" value="ECO:0000250"/>
    <property type="project" value="UniProtKB"/>
</dbReference>
<dbReference type="GO" id="GO:0005102">
    <property type="term" value="F:signaling receptor binding"/>
    <property type="evidence" value="ECO:0000314"/>
    <property type="project" value="UniProtKB"/>
</dbReference>
<dbReference type="GO" id="GO:0098609">
    <property type="term" value="P:cell-cell adhesion"/>
    <property type="evidence" value="ECO:0000250"/>
    <property type="project" value="UniProtKB"/>
</dbReference>
<dbReference type="GO" id="GO:0000122">
    <property type="term" value="P:negative regulation of transcription by RNA polymerase II"/>
    <property type="evidence" value="ECO:0000250"/>
    <property type="project" value="UniProtKB"/>
</dbReference>
<dbReference type="GO" id="GO:0048666">
    <property type="term" value="P:neuron development"/>
    <property type="evidence" value="ECO:0000318"/>
    <property type="project" value="GO_Central"/>
</dbReference>
<dbReference type="GO" id="GO:0051491">
    <property type="term" value="P:positive regulation of filopodium assembly"/>
    <property type="evidence" value="ECO:0000250"/>
    <property type="project" value="UniProtKB"/>
</dbReference>
<dbReference type="GO" id="GO:0098942">
    <property type="term" value="P:retrograde trans-synaptic signaling by trans-synaptic protein complex"/>
    <property type="evidence" value="ECO:0000314"/>
    <property type="project" value="SynGO"/>
</dbReference>
<dbReference type="GO" id="GO:0007165">
    <property type="term" value="P:signal transduction"/>
    <property type="evidence" value="ECO:0007669"/>
    <property type="project" value="InterPro"/>
</dbReference>
<dbReference type="CDD" id="cd00054">
    <property type="entry name" value="EGF_CA"/>
    <property type="match status" value="3"/>
</dbReference>
<dbReference type="FunFam" id="2.60.120.260:FF:000176">
    <property type="entry name" value="Si:ch211-12m10.1"/>
    <property type="match status" value="1"/>
</dbReference>
<dbReference type="FunFam" id="2.10.25.10:FF:000016">
    <property type="entry name" value="Teneurin transmembrane protein 2"/>
    <property type="match status" value="1"/>
</dbReference>
<dbReference type="FunFam" id="2.10.25.10:FF:000021">
    <property type="entry name" value="Teneurin transmembrane protein 2"/>
    <property type="match status" value="1"/>
</dbReference>
<dbReference type="FunFam" id="2.10.25.10:FF:000026">
    <property type="entry name" value="Teneurin transmembrane protein 2"/>
    <property type="match status" value="1"/>
</dbReference>
<dbReference type="FunFam" id="2.10.25.10:FF:000474">
    <property type="entry name" value="Teneurin transmembrane protein 2"/>
    <property type="match status" value="1"/>
</dbReference>
<dbReference type="FunFam" id="2.120.10.30:FF:000003">
    <property type="entry name" value="Teneurin transmembrane protein 2"/>
    <property type="match status" value="1"/>
</dbReference>
<dbReference type="FunFam" id="2.10.25.10:FF:000013">
    <property type="entry name" value="Teneurin transmembrane protein 4"/>
    <property type="match status" value="1"/>
</dbReference>
<dbReference type="FunFam" id="2.120.10.30:FF:000061">
    <property type="entry name" value="teneurin-2 isoform X1"/>
    <property type="match status" value="1"/>
</dbReference>
<dbReference type="Gene3D" id="2.10.25.10">
    <property type="entry name" value="Laminin"/>
    <property type="match status" value="7"/>
</dbReference>
<dbReference type="Gene3D" id="2.180.10.10">
    <property type="entry name" value="RHS repeat-associated core"/>
    <property type="match status" value="1"/>
</dbReference>
<dbReference type="Gene3D" id="2.120.10.30">
    <property type="entry name" value="TolB, C-terminal domain"/>
    <property type="match status" value="2"/>
</dbReference>
<dbReference type="InterPro" id="IPR011042">
    <property type="entry name" value="6-blade_b-propeller_TolB-like"/>
</dbReference>
<dbReference type="InterPro" id="IPR008969">
    <property type="entry name" value="CarboxyPept-like_regulatory"/>
</dbReference>
<dbReference type="InterPro" id="IPR001881">
    <property type="entry name" value="EGF-like_Ca-bd_dom"/>
</dbReference>
<dbReference type="InterPro" id="IPR000742">
    <property type="entry name" value="EGF-like_dom"/>
</dbReference>
<dbReference type="InterPro" id="IPR011044">
    <property type="entry name" value="Quino_amine_DH_bsu"/>
</dbReference>
<dbReference type="InterPro" id="IPR022385">
    <property type="entry name" value="Rhs_assc_core"/>
</dbReference>
<dbReference type="InterPro" id="IPR009471">
    <property type="entry name" value="Ten_N"/>
</dbReference>
<dbReference type="InterPro" id="IPR056822">
    <property type="entry name" value="TEN_NHL"/>
</dbReference>
<dbReference type="InterPro" id="IPR056820">
    <property type="entry name" value="TEN_TTR-like"/>
</dbReference>
<dbReference type="InterPro" id="IPR056823">
    <property type="entry name" value="TEN_YD-shell"/>
</dbReference>
<dbReference type="InterPro" id="IPR051216">
    <property type="entry name" value="Teneurin"/>
</dbReference>
<dbReference type="InterPro" id="IPR028916">
    <property type="entry name" value="Tox-GHH_dom"/>
</dbReference>
<dbReference type="InterPro" id="IPR006530">
    <property type="entry name" value="YD"/>
</dbReference>
<dbReference type="NCBIfam" id="TIGR03696">
    <property type="entry name" value="Rhs_assc_core"/>
    <property type="match status" value="1"/>
</dbReference>
<dbReference type="NCBIfam" id="TIGR01643">
    <property type="entry name" value="YD_repeat_2x"/>
    <property type="match status" value="1"/>
</dbReference>
<dbReference type="PANTHER" id="PTHR11219">
    <property type="entry name" value="TENEURIN AND N-ACETYLGLUCOSAMINE-1-PHOSPHODIESTER ALPHA-N-ACETYLGLUCOSAMINIDASE"/>
    <property type="match status" value="1"/>
</dbReference>
<dbReference type="PANTHER" id="PTHR11219:SF8">
    <property type="entry name" value="TENEURIN-2"/>
    <property type="match status" value="1"/>
</dbReference>
<dbReference type="Pfam" id="PF25024">
    <property type="entry name" value="EGF_TEN"/>
    <property type="match status" value="1"/>
</dbReference>
<dbReference type="Pfam" id="PF24329">
    <property type="entry name" value="FN-plug_TEN1-4"/>
    <property type="match status" value="1"/>
</dbReference>
<dbReference type="Pfam" id="PF23093">
    <property type="entry name" value="GBD_Tenm3"/>
    <property type="match status" value="1"/>
</dbReference>
<dbReference type="Pfam" id="PF06484">
    <property type="entry name" value="Ten_N"/>
    <property type="match status" value="1"/>
</dbReference>
<dbReference type="Pfam" id="PF25021">
    <property type="entry name" value="TEN_NHL"/>
    <property type="match status" value="1"/>
</dbReference>
<dbReference type="Pfam" id="PF25023">
    <property type="entry name" value="TEN_YD-shell"/>
    <property type="match status" value="1"/>
</dbReference>
<dbReference type="Pfam" id="PF23538">
    <property type="entry name" value="Teneurin_ABD"/>
    <property type="match status" value="1"/>
</dbReference>
<dbReference type="Pfam" id="PF15636">
    <property type="entry name" value="Tox-GHH"/>
    <property type="match status" value="1"/>
</dbReference>
<dbReference type="Pfam" id="PF25020">
    <property type="entry name" value="TTR_TEN1-4"/>
    <property type="match status" value="1"/>
</dbReference>
<dbReference type="SMART" id="SM00181">
    <property type="entry name" value="EGF"/>
    <property type="match status" value="8"/>
</dbReference>
<dbReference type="SMART" id="SM00179">
    <property type="entry name" value="EGF_CA"/>
    <property type="match status" value="2"/>
</dbReference>
<dbReference type="SUPFAM" id="SSF49464">
    <property type="entry name" value="Carboxypeptidase regulatory domain-like"/>
    <property type="match status" value="1"/>
</dbReference>
<dbReference type="SUPFAM" id="SSF101898">
    <property type="entry name" value="NHL repeat"/>
    <property type="match status" value="1"/>
</dbReference>
<dbReference type="SUPFAM" id="SSF50969">
    <property type="entry name" value="YVTN repeat-like/Quinoprotein amine dehydrogenase"/>
    <property type="match status" value="1"/>
</dbReference>
<dbReference type="PROSITE" id="PS00022">
    <property type="entry name" value="EGF_1"/>
    <property type="match status" value="8"/>
</dbReference>
<dbReference type="PROSITE" id="PS01186">
    <property type="entry name" value="EGF_2"/>
    <property type="match status" value="7"/>
</dbReference>
<dbReference type="PROSITE" id="PS50026">
    <property type="entry name" value="EGF_3"/>
    <property type="match status" value="5"/>
</dbReference>
<dbReference type="PROSITE" id="PS51361">
    <property type="entry name" value="TENEURIN_N"/>
    <property type="match status" value="1"/>
</dbReference>